<reference key="1">
    <citation type="submission" date="2008-10" db="EMBL/GenBank/DDBJ databases">
        <title>Genome sequence of Bacillus cereus AH187.</title>
        <authorList>
            <person name="Dodson R.J."/>
            <person name="Durkin A.S."/>
            <person name="Rosovitz M.J."/>
            <person name="Rasko D.A."/>
            <person name="Kolsto A.B."/>
            <person name="Okstad O.A."/>
            <person name="Ravel J."/>
            <person name="Sutton G."/>
        </authorList>
    </citation>
    <scope>NUCLEOTIDE SEQUENCE [LARGE SCALE GENOMIC DNA]</scope>
    <source>
        <strain>AH187</strain>
    </source>
</reference>
<name>HIS3_BACC7</name>
<dbReference type="EC" id="3.5.4.19" evidence="1"/>
<dbReference type="EMBL" id="CP001177">
    <property type="protein sequence ID" value="ACJ82482.1"/>
    <property type="molecule type" value="Genomic_DNA"/>
</dbReference>
<dbReference type="SMR" id="B7HKD5"/>
<dbReference type="KEGG" id="bcr:BCAH187_A1570"/>
<dbReference type="HOGENOM" id="CLU_048577_5_3_9"/>
<dbReference type="UniPathway" id="UPA00031">
    <property type="reaction ID" value="UER00008"/>
</dbReference>
<dbReference type="Proteomes" id="UP000002214">
    <property type="component" value="Chromosome"/>
</dbReference>
<dbReference type="GO" id="GO:0005737">
    <property type="term" value="C:cytoplasm"/>
    <property type="evidence" value="ECO:0007669"/>
    <property type="project" value="UniProtKB-SubCell"/>
</dbReference>
<dbReference type="GO" id="GO:0000287">
    <property type="term" value="F:magnesium ion binding"/>
    <property type="evidence" value="ECO:0007669"/>
    <property type="project" value="UniProtKB-UniRule"/>
</dbReference>
<dbReference type="GO" id="GO:0004635">
    <property type="term" value="F:phosphoribosyl-AMP cyclohydrolase activity"/>
    <property type="evidence" value="ECO:0007669"/>
    <property type="project" value="UniProtKB-UniRule"/>
</dbReference>
<dbReference type="GO" id="GO:0008270">
    <property type="term" value="F:zinc ion binding"/>
    <property type="evidence" value="ECO:0007669"/>
    <property type="project" value="UniProtKB-UniRule"/>
</dbReference>
<dbReference type="GO" id="GO:0000105">
    <property type="term" value="P:L-histidine biosynthetic process"/>
    <property type="evidence" value="ECO:0007669"/>
    <property type="project" value="UniProtKB-UniRule"/>
</dbReference>
<dbReference type="FunFam" id="3.10.20.810:FF:000001">
    <property type="entry name" value="Histidine biosynthesis bifunctional protein HisIE"/>
    <property type="match status" value="1"/>
</dbReference>
<dbReference type="Gene3D" id="3.10.20.810">
    <property type="entry name" value="Phosphoribosyl-AMP cyclohydrolase"/>
    <property type="match status" value="1"/>
</dbReference>
<dbReference type="HAMAP" id="MF_01021">
    <property type="entry name" value="HisI"/>
    <property type="match status" value="1"/>
</dbReference>
<dbReference type="InterPro" id="IPR026660">
    <property type="entry name" value="PRA-CH"/>
</dbReference>
<dbReference type="InterPro" id="IPR002496">
    <property type="entry name" value="PRib_AMP_CycHydrolase_dom"/>
</dbReference>
<dbReference type="InterPro" id="IPR038019">
    <property type="entry name" value="PRib_AMP_CycHydrolase_sf"/>
</dbReference>
<dbReference type="NCBIfam" id="NF000768">
    <property type="entry name" value="PRK00051.1"/>
    <property type="match status" value="1"/>
</dbReference>
<dbReference type="PANTHER" id="PTHR42945">
    <property type="entry name" value="HISTIDINE BIOSYNTHESIS BIFUNCTIONAL PROTEIN"/>
    <property type="match status" value="1"/>
</dbReference>
<dbReference type="PANTHER" id="PTHR42945:SF9">
    <property type="entry name" value="HISTIDINE BIOSYNTHESIS BIFUNCTIONAL PROTEIN HISIE"/>
    <property type="match status" value="1"/>
</dbReference>
<dbReference type="Pfam" id="PF01502">
    <property type="entry name" value="PRA-CH"/>
    <property type="match status" value="1"/>
</dbReference>
<dbReference type="SUPFAM" id="SSF141734">
    <property type="entry name" value="HisI-like"/>
    <property type="match status" value="1"/>
</dbReference>
<keyword id="KW-0028">Amino-acid biosynthesis</keyword>
<keyword id="KW-0963">Cytoplasm</keyword>
<keyword id="KW-0368">Histidine biosynthesis</keyword>
<keyword id="KW-0378">Hydrolase</keyword>
<keyword id="KW-0460">Magnesium</keyword>
<keyword id="KW-0479">Metal-binding</keyword>
<keyword id="KW-0862">Zinc</keyword>
<sequence length="101" mass="11598">MKPNFSKGLLPAIVIEEGTKEVLMLAYMNEEAYEKTLKTKRTWFYSRSRRSLWNKGETSGNVQHVQSLYLDCDQDAIVVVVKQVGPACHTGEKTCFHYKII</sequence>
<feature type="chain" id="PRO_1000135333" description="Phosphoribosyl-AMP cyclohydrolase">
    <location>
        <begin position="1"/>
        <end position="101"/>
    </location>
</feature>
<feature type="binding site" evidence="1">
    <location>
        <position position="71"/>
    </location>
    <ligand>
        <name>Mg(2+)</name>
        <dbReference type="ChEBI" id="CHEBI:18420"/>
    </ligand>
</feature>
<feature type="binding site" evidence="1">
    <location>
        <position position="72"/>
    </location>
    <ligand>
        <name>Zn(2+)</name>
        <dbReference type="ChEBI" id="CHEBI:29105"/>
        <note>ligand shared between dimeric partners</note>
    </ligand>
</feature>
<feature type="binding site" evidence="1">
    <location>
        <position position="73"/>
    </location>
    <ligand>
        <name>Mg(2+)</name>
        <dbReference type="ChEBI" id="CHEBI:18420"/>
    </ligand>
</feature>
<feature type="binding site" evidence="1">
    <location>
        <position position="75"/>
    </location>
    <ligand>
        <name>Mg(2+)</name>
        <dbReference type="ChEBI" id="CHEBI:18420"/>
    </ligand>
</feature>
<feature type="binding site" evidence="1">
    <location>
        <position position="88"/>
    </location>
    <ligand>
        <name>Zn(2+)</name>
        <dbReference type="ChEBI" id="CHEBI:29105"/>
        <note>ligand shared between dimeric partners</note>
    </ligand>
</feature>
<feature type="binding site" evidence="1">
    <location>
        <position position="95"/>
    </location>
    <ligand>
        <name>Zn(2+)</name>
        <dbReference type="ChEBI" id="CHEBI:29105"/>
        <note>ligand shared between dimeric partners</note>
    </ligand>
</feature>
<accession>B7HKD5</accession>
<comment type="function">
    <text evidence="1">Catalyzes the hydrolysis of the adenine ring of phosphoribosyl-AMP.</text>
</comment>
<comment type="catalytic activity">
    <reaction evidence="1">
        <text>1-(5-phospho-beta-D-ribosyl)-5'-AMP + H2O = 1-(5-phospho-beta-D-ribosyl)-5-[(5-phospho-beta-D-ribosylamino)methylideneamino]imidazole-4-carboxamide</text>
        <dbReference type="Rhea" id="RHEA:20049"/>
        <dbReference type="ChEBI" id="CHEBI:15377"/>
        <dbReference type="ChEBI" id="CHEBI:58435"/>
        <dbReference type="ChEBI" id="CHEBI:59457"/>
        <dbReference type="EC" id="3.5.4.19"/>
    </reaction>
</comment>
<comment type="cofactor">
    <cofactor evidence="1">
        <name>Mg(2+)</name>
        <dbReference type="ChEBI" id="CHEBI:18420"/>
    </cofactor>
    <text evidence="1">Binds 1 Mg(2+) ion per subunit.</text>
</comment>
<comment type="cofactor">
    <cofactor evidence="1">
        <name>Zn(2+)</name>
        <dbReference type="ChEBI" id="CHEBI:29105"/>
    </cofactor>
    <text evidence="1">Binds 1 zinc ion per subunit.</text>
</comment>
<comment type="pathway">
    <text evidence="1">Amino-acid biosynthesis; L-histidine biosynthesis; L-histidine from 5-phospho-alpha-D-ribose 1-diphosphate: step 3/9.</text>
</comment>
<comment type="subunit">
    <text evidence="1">Homodimer.</text>
</comment>
<comment type="subcellular location">
    <subcellularLocation>
        <location evidence="1">Cytoplasm</location>
    </subcellularLocation>
</comment>
<comment type="similarity">
    <text evidence="1">Belongs to the PRA-CH family.</text>
</comment>
<proteinExistence type="inferred from homology"/>
<evidence type="ECO:0000255" key="1">
    <source>
        <dbReference type="HAMAP-Rule" id="MF_01021"/>
    </source>
</evidence>
<organism>
    <name type="scientific">Bacillus cereus (strain AH187)</name>
    <dbReference type="NCBI Taxonomy" id="405534"/>
    <lineage>
        <taxon>Bacteria</taxon>
        <taxon>Bacillati</taxon>
        <taxon>Bacillota</taxon>
        <taxon>Bacilli</taxon>
        <taxon>Bacillales</taxon>
        <taxon>Bacillaceae</taxon>
        <taxon>Bacillus</taxon>
        <taxon>Bacillus cereus group</taxon>
    </lineage>
</organism>
<protein>
    <recommendedName>
        <fullName evidence="1">Phosphoribosyl-AMP cyclohydrolase</fullName>
        <shortName evidence="1">PRA-CH</shortName>
        <ecNumber evidence="1">3.5.4.19</ecNumber>
    </recommendedName>
</protein>
<gene>
    <name evidence="1" type="primary">hisI</name>
    <name type="ordered locus">BCAH187_A1570</name>
</gene>